<sequence length="222" mass="25370">MNVAILLAAGKGERMSENVPKQFLEIEGRMLFEYPLSTFLKSEAIDGVVIVTRREWFEVVEKRVFHEKVLGIVEGGDTRSQSVRSALEFLEKFSPSYVLVHDSARPFLRKKHVSEVLRRARETGAATLALKNSDALVRVENDRIEYIPRKGVYRILTPQAFSYEILKKAHENGGEWADDTEPVQKLGVKIALVEGDPLCFKVTFKEDLELARIIAREWERIP</sequence>
<protein>
    <recommendedName>
        <fullName evidence="1">2-C-methyl-D-erythritol 4-phosphate cytidylyltransferase</fullName>
        <ecNumber evidence="1">2.7.7.60</ecNumber>
    </recommendedName>
    <alternativeName>
        <fullName evidence="1">4-diphosphocytidyl-2C-methyl-D-erythritol synthase</fullName>
    </alternativeName>
    <alternativeName>
        <fullName evidence="1">MEP cytidylyltransferase</fullName>
        <shortName evidence="1">MCT</shortName>
    </alternativeName>
</protein>
<gene>
    <name evidence="1" type="primary">ispD</name>
    <name type="ordered locus">TM_1393</name>
</gene>
<accession>Q9X1B3</accession>
<dbReference type="EC" id="2.7.7.60" evidence="1"/>
<dbReference type="EMBL" id="AE000512">
    <property type="protein sequence ID" value="AAD36464.1"/>
    <property type="molecule type" value="Genomic_DNA"/>
</dbReference>
<dbReference type="PIR" id="B72259">
    <property type="entry name" value="B72259"/>
</dbReference>
<dbReference type="RefSeq" id="NP_229194.1">
    <property type="nucleotide sequence ID" value="NC_000853.1"/>
</dbReference>
<dbReference type="RefSeq" id="WP_004081602.1">
    <property type="nucleotide sequence ID" value="NC_000853.1"/>
</dbReference>
<dbReference type="PDB" id="1VPA">
    <property type="method" value="X-ray"/>
    <property type="resolution" value="2.67 A"/>
    <property type="chains" value="A/B=1-222"/>
</dbReference>
<dbReference type="PDBsum" id="1VPA"/>
<dbReference type="SMR" id="Q9X1B3"/>
<dbReference type="FunCoup" id="Q9X1B3">
    <property type="interactions" value="254"/>
</dbReference>
<dbReference type="STRING" id="243274.TM_1393"/>
<dbReference type="DrugBank" id="DB02431">
    <property type="generic name" value="Cytidine-5'-Triphosphate"/>
</dbReference>
<dbReference type="PaxDb" id="243274-THEMA_07350"/>
<dbReference type="EnsemblBacteria" id="AAD36464">
    <property type="protein sequence ID" value="AAD36464"/>
    <property type="gene ID" value="TM_1393"/>
</dbReference>
<dbReference type="KEGG" id="tma:TM1393"/>
<dbReference type="KEGG" id="tmi:THEMA_07350"/>
<dbReference type="KEGG" id="tmm:Tmari_1400"/>
<dbReference type="KEGG" id="tmw:THMA_1422"/>
<dbReference type="eggNOG" id="COG1211">
    <property type="taxonomic scope" value="Bacteria"/>
</dbReference>
<dbReference type="InParanoid" id="Q9X1B3"/>
<dbReference type="OrthoDB" id="9806837at2"/>
<dbReference type="UniPathway" id="UPA00056">
    <property type="reaction ID" value="UER00093"/>
</dbReference>
<dbReference type="EvolutionaryTrace" id="Q9X1B3"/>
<dbReference type="Proteomes" id="UP000008183">
    <property type="component" value="Chromosome"/>
</dbReference>
<dbReference type="GO" id="GO:0005829">
    <property type="term" value="C:cytosol"/>
    <property type="evidence" value="ECO:0000318"/>
    <property type="project" value="GO_Central"/>
</dbReference>
<dbReference type="GO" id="GO:0050518">
    <property type="term" value="F:2-C-methyl-D-erythritol 4-phosphate cytidylyltransferase activity"/>
    <property type="evidence" value="ECO:0007669"/>
    <property type="project" value="UniProtKB-UniRule"/>
</dbReference>
<dbReference type="GO" id="GO:0070567">
    <property type="term" value="F:cytidylyltransferase activity"/>
    <property type="evidence" value="ECO:0000318"/>
    <property type="project" value="GO_Central"/>
</dbReference>
<dbReference type="GO" id="GO:0019288">
    <property type="term" value="P:isopentenyl diphosphate biosynthetic process, methylerythritol 4-phosphate pathway"/>
    <property type="evidence" value="ECO:0007669"/>
    <property type="project" value="UniProtKB-UniRule"/>
</dbReference>
<dbReference type="CDD" id="cd02516">
    <property type="entry name" value="CDP-ME_synthetase"/>
    <property type="match status" value="1"/>
</dbReference>
<dbReference type="FunFam" id="3.90.550.10:FF:000268">
    <property type="entry name" value="2-C-methyl-D-erythritol 4-phosphate cytidylyltransferase"/>
    <property type="match status" value="1"/>
</dbReference>
<dbReference type="Gene3D" id="3.90.550.10">
    <property type="entry name" value="Spore Coat Polysaccharide Biosynthesis Protein SpsA, Chain A"/>
    <property type="match status" value="1"/>
</dbReference>
<dbReference type="HAMAP" id="MF_00108">
    <property type="entry name" value="IspD"/>
    <property type="match status" value="1"/>
</dbReference>
<dbReference type="InterPro" id="IPR001228">
    <property type="entry name" value="IspD"/>
</dbReference>
<dbReference type="InterPro" id="IPR034683">
    <property type="entry name" value="IspD/TarI"/>
</dbReference>
<dbReference type="InterPro" id="IPR018294">
    <property type="entry name" value="ISPD_synthase_CS"/>
</dbReference>
<dbReference type="InterPro" id="IPR029044">
    <property type="entry name" value="Nucleotide-diphossugar_trans"/>
</dbReference>
<dbReference type="NCBIfam" id="TIGR00453">
    <property type="entry name" value="ispD"/>
    <property type="match status" value="1"/>
</dbReference>
<dbReference type="PANTHER" id="PTHR43015">
    <property type="entry name" value="D-RIBITOL-5-PHOSPHATE CYTIDYLYLTRANSFERASE"/>
    <property type="match status" value="1"/>
</dbReference>
<dbReference type="PANTHER" id="PTHR43015:SF1">
    <property type="entry name" value="D-RIBITOL-5-PHOSPHATE CYTIDYLYLTRANSFERASE"/>
    <property type="match status" value="1"/>
</dbReference>
<dbReference type="Pfam" id="PF01128">
    <property type="entry name" value="IspD"/>
    <property type="match status" value="1"/>
</dbReference>
<dbReference type="SUPFAM" id="SSF53448">
    <property type="entry name" value="Nucleotide-diphospho-sugar transferases"/>
    <property type="match status" value="1"/>
</dbReference>
<dbReference type="PROSITE" id="PS01295">
    <property type="entry name" value="ISPD"/>
    <property type="match status" value="1"/>
</dbReference>
<name>ISPD_THEMA</name>
<evidence type="ECO:0000255" key="1">
    <source>
        <dbReference type="HAMAP-Rule" id="MF_00108"/>
    </source>
</evidence>
<evidence type="ECO:0007829" key="2">
    <source>
        <dbReference type="PDB" id="1VPA"/>
    </source>
</evidence>
<reference key="1">
    <citation type="journal article" date="1999" name="Nature">
        <title>Evidence for lateral gene transfer between Archaea and Bacteria from genome sequence of Thermotoga maritima.</title>
        <authorList>
            <person name="Nelson K.E."/>
            <person name="Clayton R.A."/>
            <person name="Gill S.R."/>
            <person name="Gwinn M.L."/>
            <person name="Dodson R.J."/>
            <person name="Haft D.H."/>
            <person name="Hickey E.K."/>
            <person name="Peterson J.D."/>
            <person name="Nelson W.C."/>
            <person name="Ketchum K.A."/>
            <person name="McDonald L.A."/>
            <person name="Utterback T.R."/>
            <person name="Malek J.A."/>
            <person name="Linher K.D."/>
            <person name="Garrett M.M."/>
            <person name="Stewart A.M."/>
            <person name="Cotton M.D."/>
            <person name="Pratt M.S."/>
            <person name="Phillips C.A."/>
            <person name="Richardson D.L."/>
            <person name="Heidelberg J.F."/>
            <person name="Sutton G.G."/>
            <person name="Fleischmann R.D."/>
            <person name="Eisen J.A."/>
            <person name="White O."/>
            <person name="Salzberg S.L."/>
            <person name="Smith H.O."/>
            <person name="Venter J.C."/>
            <person name="Fraser C.M."/>
        </authorList>
    </citation>
    <scope>NUCLEOTIDE SEQUENCE [LARGE SCALE GENOMIC DNA]</scope>
    <source>
        <strain>ATCC 43589 / DSM 3109 / JCM 10099 / NBRC 100826 / MSB8</strain>
    </source>
</reference>
<organism>
    <name type="scientific">Thermotoga maritima (strain ATCC 43589 / DSM 3109 / JCM 10099 / NBRC 100826 / MSB8)</name>
    <dbReference type="NCBI Taxonomy" id="243274"/>
    <lineage>
        <taxon>Bacteria</taxon>
        <taxon>Thermotogati</taxon>
        <taxon>Thermotogota</taxon>
        <taxon>Thermotogae</taxon>
        <taxon>Thermotogales</taxon>
        <taxon>Thermotogaceae</taxon>
        <taxon>Thermotoga</taxon>
    </lineage>
</organism>
<keyword id="KW-0002">3D-structure</keyword>
<keyword id="KW-0414">Isoprene biosynthesis</keyword>
<keyword id="KW-0548">Nucleotidyltransferase</keyword>
<keyword id="KW-1185">Reference proteome</keyword>
<keyword id="KW-0808">Transferase</keyword>
<comment type="function">
    <text evidence="1">Catalyzes the formation of 4-diphosphocytidyl-2-C-methyl-D-erythritol from CTP and 2-C-methyl-D-erythritol 4-phosphate (MEP).</text>
</comment>
<comment type="catalytic activity">
    <reaction evidence="1">
        <text>2-C-methyl-D-erythritol 4-phosphate + CTP + H(+) = 4-CDP-2-C-methyl-D-erythritol + diphosphate</text>
        <dbReference type="Rhea" id="RHEA:13429"/>
        <dbReference type="ChEBI" id="CHEBI:15378"/>
        <dbReference type="ChEBI" id="CHEBI:33019"/>
        <dbReference type="ChEBI" id="CHEBI:37563"/>
        <dbReference type="ChEBI" id="CHEBI:57823"/>
        <dbReference type="ChEBI" id="CHEBI:58262"/>
        <dbReference type="EC" id="2.7.7.60"/>
    </reaction>
</comment>
<comment type="pathway">
    <text evidence="1">Isoprenoid biosynthesis; isopentenyl diphosphate biosynthesis via DXP pathway; isopentenyl diphosphate from 1-deoxy-D-xylulose 5-phosphate: step 2/6.</text>
</comment>
<comment type="similarity">
    <text evidence="1">Belongs to the IspD/TarI cytidylyltransferase family. IspD subfamily.</text>
</comment>
<proteinExistence type="evidence at protein level"/>
<feature type="chain" id="PRO_0000075638" description="2-C-methyl-D-erythritol 4-phosphate cytidylyltransferase">
    <location>
        <begin position="1"/>
        <end position="222"/>
    </location>
</feature>
<feature type="site" description="Transition state stabilizer" evidence="1">
    <location>
        <position position="14"/>
    </location>
</feature>
<feature type="site" description="Transition state stabilizer" evidence="1">
    <location>
        <position position="21"/>
    </location>
</feature>
<feature type="site" description="Positions MEP for the nucleophilic attack" evidence="1">
    <location>
        <position position="149"/>
    </location>
</feature>
<feature type="site" description="Positions MEP for the nucleophilic attack" evidence="1">
    <location>
        <position position="201"/>
    </location>
</feature>
<feature type="strand" evidence="2">
    <location>
        <begin position="2"/>
        <end position="8"/>
    </location>
</feature>
<feature type="helix" evidence="2">
    <location>
        <begin position="13"/>
        <end position="15"/>
    </location>
</feature>
<feature type="helix" evidence="2">
    <location>
        <begin position="21"/>
        <end position="23"/>
    </location>
</feature>
<feature type="helix" evidence="2">
    <location>
        <begin position="33"/>
        <end position="41"/>
    </location>
</feature>
<feature type="strand" evidence="2">
    <location>
        <begin position="46"/>
        <end position="52"/>
    </location>
</feature>
<feature type="helix" evidence="2">
    <location>
        <begin position="54"/>
        <end position="56"/>
    </location>
</feature>
<feature type="helix" evidence="2">
    <location>
        <begin position="57"/>
        <end position="61"/>
    </location>
</feature>
<feature type="strand" evidence="2">
    <location>
        <begin position="69"/>
        <end position="74"/>
    </location>
</feature>
<feature type="helix" evidence="2">
    <location>
        <begin position="79"/>
        <end position="90"/>
    </location>
</feature>
<feature type="helix" evidence="2">
    <location>
        <begin position="91"/>
        <end position="93"/>
    </location>
</feature>
<feature type="strand" evidence="2">
    <location>
        <begin position="96"/>
        <end position="102"/>
    </location>
</feature>
<feature type="helix" evidence="2">
    <location>
        <begin position="110"/>
        <end position="123"/>
    </location>
</feature>
<feature type="strand" evidence="2">
    <location>
        <begin position="124"/>
        <end position="131"/>
    </location>
</feature>
<feature type="strand" evidence="2">
    <location>
        <begin position="134"/>
        <end position="140"/>
    </location>
</feature>
<feature type="strand" evidence="2">
    <location>
        <begin position="143"/>
        <end position="147"/>
    </location>
</feature>
<feature type="strand" evidence="2">
    <location>
        <begin position="152"/>
        <end position="162"/>
    </location>
</feature>
<feature type="helix" evidence="2">
    <location>
        <begin position="163"/>
        <end position="170"/>
    </location>
</feature>
<feature type="strand" evidence="2">
    <location>
        <begin position="177"/>
        <end position="179"/>
    </location>
</feature>
<feature type="helix" evidence="2">
    <location>
        <begin position="180"/>
        <end position="184"/>
    </location>
</feature>
<feature type="turn" evidence="2">
    <location>
        <begin position="185"/>
        <end position="187"/>
    </location>
</feature>
<feature type="strand" evidence="2">
    <location>
        <begin position="191"/>
        <end position="194"/>
    </location>
</feature>
<feature type="helix" evidence="2">
    <location>
        <begin position="197"/>
        <end position="199"/>
    </location>
</feature>
<feature type="helix" evidence="2">
    <location>
        <begin position="207"/>
        <end position="218"/>
    </location>
</feature>